<evidence type="ECO:0000255" key="1">
    <source>
        <dbReference type="PROSITE-ProRule" id="PRU00080"/>
    </source>
</evidence>
<accession>Q9SH13</accession>
<protein>
    <recommendedName>
        <fullName>Putative F-box protein At1g77880</fullName>
    </recommendedName>
</protein>
<proteinExistence type="predicted"/>
<gene>
    <name type="ordered locus">At1g77880</name>
    <name type="ORF">F28K19.9</name>
</gene>
<dbReference type="EMBL" id="AC009243">
    <property type="protein sequence ID" value="AAF17699.1"/>
    <property type="molecule type" value="Genomic_DNA"/>
</dbReference>
<dbReference type="EMBL" id="CP002684">
    <property type="protein sequence ID" value="AEE36038.1"/>
    <property type="molecule type" value="Genomic_DNA"/>
</dbReference>
<dbReference type="RefSeq" id="NP_177911.1">
    <molecule id="Q9SH13-1"/>
    <property type="nucleotide sequence ID" value="NM_106437.2"/>
</dbReference>
<dbReference type="SMR" id="Q9SH13"/>
<dbReference type="BioGRID" id="29343">
    <property type="interactions" value="1"/>
</dbReference>
<dbReference type="FunCoup" id="Q9SH13">
    <property type="interactions" value="27"/>
</dbReference>
<dbReference type="IntAct" id="Q9SH13">
    <property type="interactions" value="1"/>
</dbReference>
<dbReference type="PaxDb" id="3702-AT1G77880.1"/>
<dbReference type="ProteomicsDB" id="230065">
    <molecule id="Q9SH13-1"/>
</dbReference>
<dbReference type="DNASU" id="844124"/>
<dbReference type="EnsemblPlants" id="AT1G77880.1">
    <molecule id="Q9SH13-1"/>
    <property type="protein sequence ID" value="AT1G77880.1"/>
    <property type="gene ID" value="AT1G77880"/>
</dbReference>
<dbReference type="GeneID" id="844124"/>
<dbReference type="Gramene" id="AT1G77880.1">
    <molecule id="Q9SH13-1"/>
    <property type="protein sequence ID" value="AT1G77880.1"/>
    <property type="gene ID" value="AT1G77880"/>
</dbReference>
<dbReference type="KEGG" id="ath:AT1G77880"/>
<dbReference type="Araport" id="AT1G77880"/>
<dbReference type="TAIR" id="AT1G77880"/>
<dbReference type="eggNOG" id="KOG1072">
    <property type="taxonomic scope" value="Eukaryota"/>
</dbReference>
<dbReference type="HOGENOM" id="CLU_1941005_0_0_1"/>
<dbReference type="InParanoid" id="Q9SH13"/>
<dbReference type="PhylomeDB" id="Q9SH13"/>
<dbReference type="PRO" id="PR:Q9SH13"/>
<dbReference type="Proteomes" id="UP000006548">
    <property type="component" value="Chromosome 1"/>
</dbReference>
<dbReference type="ExpressionAtlas" id="Q9SH13">
    <property type="expression patterns" value="baseline and differential"/>
</dbReference>
<dbReference type="CDD" id="cd22152">
    <property type="entry name" value="F-box_AtAFR-like"/>
    <property type="match status" value="1"/>
</dbReference>
<dbReference type="InterPro" id="IPR036047">
    <property type="entry name" value="F-box-like_dom_sf"/>
</dbReference>
<dbReference type="InterPro" id="IPR050354">
    <property type="entry name" value="F-box/kelch-repeat_ARATH"/>
</dbReference>
<dbReference type="InterPro" id="IPR001810">
    <property type="entry name" value="F-box_dom"/>
</dbReference>
<dbReference type="PANTHER" id="PTHR24414">
    <property type="entry name" value="F-BOX/KELCH-REPEAT PROTEIN SKIP4"/>
    <property type="match status" value="1"/>
</dbReference>
<dbReference type="PANTHER" id="PTHR24414:SF184">
    <property type="entry name" value="GALACTOSE OXIDASE_KELCH REPEAT SUPERFAMILY PROTEIN"/>
    <property type="match status" value="1"/>
</dbReference>
<dbReference type="Pfam" id="PF00646">
    <property type="entry name" value="F-box"/>
    <property type="match status" value="1"/>
</dbReference>
<dbReference type="SMART" id="SM00256">
    <property type="entry name" value="FBOX"/>
    <property type="match status" value="1"/>
</dbReference>
<dbReference type="SUPFAM" id="SSF81383">
    <property type="entry name" value="F-box domain"/>
    <property type="match status" value="1"/>
</dbReference>
<dbReference type="PROSITE" id="PS50181">
    <property type="entry name" value="FBOX"/>
    <property type="match status" value="1"/>
</dbReference>
<keyword id="KW-0025">Alternative splicing</keyword>
<keyword id="KW-1185">Reference proteome</keyword>
<name>FB90_ARATH</name>
<comment type="alternative products">
    <event type="alternative splicing"/>
    <isoform>
        <id>Q9SH13-1</id>
        <name>1</name>
        <sequence type="displayed"/>
    </isoform>
    <text>A number of isoforms are produced. According to EST sequences.</text>
</comment>
<feature type="chain" id="PRO_0000283363" description="Putative F-box protein At1g77880">
    <location>
        <begin position="1"/>
        <end position="130"/>
    </location>
</feature>
<feature type="domain" description="F-box" evidence="1">
    <location>
        <begin position="18"/>
        <end position="64"/>
    </location>
</feature>
<organism>
    <name type="scientific">Arabidopsis thaliana</name>
    <name type="common">Mouse-ear cress</name>
    <dbReference type="NCBI Taxonomy" id="3702"/>
    <lineage>
        <taxon>Eukaryota</taxon>
        <taxon>Viridiplantae</taxon>
        <taxon>Streptophyta</taxon>
        <taxon>Embryophyta</taxon>
        <taxon>Tracheophyta</taxon>
        <taxon>Spermatophyta</taxon>
        <taxon>Magnoliopsida</taxon>
        <taxon>eudicotyledons</taxon>
        <taxon>Gunneridae</taxon>
        <taxon>Pentapetalae</taxon>
        <taxon>rosids</taxon>
        <taxon>malvids</taxon>
        <taxon>Brassicales</taxon>
        <taxon>Brassicaceae</taxon>
        <taxon>Camelineae</taxon>
        <taxon>Arabidopsis</taxon>
    </lineage>
</organism>
<reference key="1">
    <citation type="journal article" date="2000" name="Nature">
        <title>Sequence and analysis of chromosome 1 of the plant Arabidopsis thaliana.</title>
        <authorList>
            <person name="Theologis A."/>
            <person name="Ecker J.R."/>
            <person name="Palm C.J."/>
            <person name="Federspiel N.A."/>
            <person name="Kaul S."/>
            <person name="White O."/>
            <person name="Alonso J."/>
            <person name="Altafi H."/>
            <person name="Araujo R."/>
            <person name="Bowman C.L."/>
            <person name="Brooks S.Y."/>
            <person name="Buehler E."/>
            <person name="Chan A."/>
            <person name="Chao Q."/>
            <person name="Chen H."/>
            <person name="Cheuk R.F."/>
            <person name="Chin C.W."/>
            <person name="Chung M.K."/>
            <person name="Conn L."/>
            <person name="Conway A.B."/>
            <person name="Conway A.R."/>
            <person name="Creasy T.H."/>
            <person name="Dewar K."/>
            <person name="Dunn P."/>
            <person name="Etgu P."/>
            <person name="Feldblyum T.V."/>
            <person name="Feng J.-D."/>
            <person name="Fong B."/>
            <person name="Fujii C.Y."/>
            <person name="Gill J.E."/>
            <person name="Goldsmith A.D."/>
            <person name="Haas B."/>
            <person name="Hansen N.F."/>
            <person name="Hughes B."/>
            <person name="Huizar L."/>
            <person name="Hunter J.L."/>
            <person name="Jenkins J."/>
            <person name="Johnson-Hopson C."/>
            <person name="Khan S."/>
            <person name="Khaykin E."/>
            <person name="Kim C.J."/>
            <person name="Koo H.L."/>
            <person name="Kremenetskaia I."/>
            <person name="Kurtz D.B."/>
            <person name="Kwan A."/>
            <person name="Lam B."/>
            <person name="Langin-Hooper S."/>
            <person name="Lee A."/>
            <person name="Lee J.M."/>
            <person name="Lenz C.A."/>
            <person name="Li J.H."/>
            <person name="Li Y.-P."/>
            <person name="Lin X."/>
            <person name="Liu S.X."/>
            <person name="Liu Z.A."/>
            <person name="Luros J.S."/>
            <person name="Maiti R."/>
            <person name="Marziali A."/>
            <person name="Militscher J."/>
            <person name="Miranda M."/>
            <person name="Nguyen M."/>
            <person name="Nierman W.C."/>
            <person name="Osborne B.I."/>
            <person name="Pai G."/>
            <person name="Peterson J."/>
            <person name="Pham P.K."/>
            <person name="Rizzo M."/>
            <person name="Rooney T."/>
            <person name="Rowley D."/>
            <person name="Sakano H."/>
            <person name="Salzberg S.L."/>
            <person name="Schwartz J.R."/>
            <person name="Shinn P."/>
            <person name="Southwick A.M."/>
            <person name="Sun H."/>
            <person name="Tallon L.J."/>
            <person name="Tambunga G."/>
            <person name="Toriumi M.J."/>
            <person name="Town C.D."/>
            <person name="Utterback T."/>
            <person name="Van Aken S."/>
            <person name="Vaysberg M."/>
            <person name="Vysotskaia V.S."/>
            <person name="Walker M."/>
            <person name="Wu D."/>
            <person name="Yu G."/>
            <person name="Fraser C.M."/>
            <person name="Venter J.C."/>
            <person name="Davis R.W."/>
        </authorList>
    </citation>
    <scope>NUCLEOTIDE SEQUENCE [LARGE SCALE GENOMIC DNA]</scope>
    <source>
        <strain>cv. Columbia</strain>
    </source>
</reference>
<reference key="2">
    <citation type="journal article" date="2017" name="Plant J.">
        <title>Araport11: a complete reannotation of the Arabidopsis thaliana reference genome.</title>
        <authorList>
            <person name="Cheng C.Y."/>
            <person name="Krishnakumar V."/>
            <person name="Chan A.P."/>
            <person name="Thibaud-Nissen F."/>
            <person name="Schobel S."/>
            <person name="Town C.D."/>
        </authorList>
    </citation>
    <scope>GENOME REANNOTATION</scope>
    <source>
        <strain>cv. Columbia</strain>
    </source>
</reference>
<sequence>MRKKKKKIVLSSTSEAEKVSIPYLPDDLLLNCLARISRLYYPTLSLVSKRFRSLLASTELYETRRLLGTSESCLYFFMTERRNDHEVYGKVEWCHVVHTLPLFNLSRALSCYHCLSHCFLMIIYIILFSI</sequence>